<protein>
    <recommendedName>
        <fullName>UPF0612 protein P20C8.01c</fullName>
    </recommendedName>
</protein>
<keyword id="KW-0175">Coiled coil</keyword>
<keyword id="KW-0963">Cytoplasm</keyword>
<keyword id="KW-1185">Reference proteome</keyword>
<reference key="1">
    <citation type="journal article" date="2002" name="Nature">
        <title>The genome sequence of Schizosaccharomyces pombe.</title>
        <authorList>
            <person name="Wood V."/>
            <person name="Gwilliam R."/>
            <person name="Rajandream M.A."/>
            <person name="Lyne M.H."/>
            <person name="Lyne R."/>
            <person name="Stewart A."/>
            <person name="Sgouros J.G."/>
            <person name="Peat N."/>
            <person name="Hayles J."/>
            <person name="Baker S.G."/>
            <person name="Basham D."/>
            <person name="Bowman S."/>
            <person name="Brooks K."/>
            <person name="Brown D."/>
            <person name="Brown S."/>
            <person name="Chillingworth T."/>
            <person name="Churcher C.M."/>
            <person name="Collins M."/>
            <person name="Connor R."/>
            <person name="Cronin A."/>
            <person name="Davis P."/>
            <person name="Feltwell T."/>
            <person name="Fraser A."/>
            <person name="Gentles S."/>
            <person name="Goble A."/>
            <person name="Hamlin N."/>
            <person name="Harris D.E."/>
            <person name="Hidalgo J."/>
            <person name="Hodgson G."/>
            <person name="Holroyd S."/>
            <person name="Hornsby T."/>
            <person name="Howarth S."/>
            <person name="Huckle E.J."/>
            <person name="Hunt S."/>
            <person name="Jagels K."/>
            <person name="James K.D."/>
            <person name="Jones L."/>
            <person name="Jones M."/>
            <person name="Leather S."/>
            <person name="McDonald S."/>
            <person name="McLean J."/>
            <person name="Mooney P."/>
            <person name="Moule S."/>
            <person name="Mungall K.L."/>
            <person name="Murphy L.D."/>
            <person name="Niblett D."/>
            <person name="Odell C."/>
            <person name="Oliver K."/>
            <person name="O'Neil S."/>
            <person name="Pearson D."/>
            <person name="Quail M.A."/>
            <person name="Rabbinowitsch E."/>
            <person name="Rutherford K.M."/>
            <person name="Rutter S."/>
            <person name="Saunders D."/>
            <person name="Seeger K."/>
            <person name="Sharp S."/>
            <person name="Skelton J."/>
            <person name="Simmonds M.N."/>
            <person name="Squares R."/>
            <person name="Squares S."/>
            <person name="Stevens K."/>
            <person name="Taylor K."/>
            <person name="Taylor R.G."/>
            <person name="Tivey A."/>
            <person name="Walsh S.V."/>
            <person name="Warren T."/>
            <person name="Whitehead S."/>
            <person name="Woodward J.R."/>
            <person name="Volckaert G."/>
            <person name="Aert R."/>
            <person name="Robben J."/>
            <person name="Grymonprez B."/>
            <person name="Weltjens I."/>
            <person name="Vanstreels E."/>
            <person name="Rieger M."/>
            <person name="Schaefer M."/>
            <person name="Mueller-Auer S."/>
            <person name="Gabel C."/>
            <person name="Fuchs M."/>
            <person name="Duesterhoeft A."/>
            <person name="Fritzc C."/>
            <person name="Holzer E."/>
            <person name="Moestl D."/>
            <person name="Hilbert H."/>
            <person name="Borzym K."/>
            <person name="Langer I."/>
            <person name="Beck A."/>
            <person name="Lehrach H."/>
            <person name="Reinhardt R."/>
            <person name="Pohl T.M."/>
            <person name="Eger P."/>
            <person name="Zimmermann W."/>
            <person name="Wedler H."/>
            <person name="Wambutt R."/>
            <person name="Purnelle B."/>
            <person name="Goffeau A."/>
            <person name="Cadieu E."/>
            <person name="Dreano S."/>
            <person name="Gloux S."/>
            <person name="Lelaure V."/>
            <person name="Mottier S."/>
            <person name="Galibert F."/>
            <person name="Aves S.J."/>
            <person name="Xiang Z."/>
            <person name="Hunt C."/>
            <person name="Moore K."/>
            <person name="Hurst S.M."/>
            <person name="Lucas M."/>
            <person name="Rochet M."/>
            <person name="Gaillardin C."/>
            <person name="Tallada V.A."/>
            <person name="Garzon A."/>
            <person name="Thode G."/>
            <person name="Daga R.R."/>
            <person name="Cruzado L."/>
            <person name="Jimenez J."/>
            <person name="Sanchez M."/>
            <person name="del Rey F."/>
            <person name="Benito J."/>
            <person name="Dominguez A."/>
            <person name="Revuelta J.L."/>
            <person name="Moreno S."/>
            <person name="Armstrong J."/>
            <person name="Forsburg S.L."/>
            <person name="Cerutti L."/>
            <person name="Lowe T."/>
            <person name="McCombie W.R."/>
            <person name="Paulsen I."/>
            <person name="Potashkin J."/>
            <person name="Shpakovski G.V."/>
            <person name="Ussery D."/>
            <person name="Barrell B.G."/>
            <person name="Nurse P."/>
        </authorList>
    </citation>
    <scope>NUCLEOTIDE SEQUENCE [LARGE SCALE GENOMIC DNA]</scope>
    <source>
        <strain>972 / ATCC 24843</strain>
    </source>
</reference>
<reference key="2">
    <citation type="journal article" date="2006" name="Nat. Biotechnol.">
        <title>ORFeome cloning and global analysis of protein localization in the fission yeast Schizosaccharomyces pombe.</title>
        <authorList>
            <person name="Matsuyama A."/>
            <person name="Arai R."/>
            <person name="Yashiroda Y."/>
            <person name="Shirai A."/>
            <person name="Kamata A."/>
            <person name="Sekido S."/>
            <person name="Kobayashi Y."/>
            <person name="Hashimoto A."/>
            <person name="Hamamoto M."/>
            <person name="Hiraoka Y."/>
            <person name="Horinouchi S."/>
            <person name="Yoshida M."/>
        </authorList>
    </citation>
    <scope>SUBCELLULAR LOCATION [LARGE SCALE ANALYSIS]</scope>
</reference>
<name>YJ51_SCHPO</name>
<gene>
    <name type="ORF">SPCP20C8.01c</name>
</gene>
<proteinExistence type="inferred from homology"/>
<organism>
    <name type="scientific">Schizosaccharomyces pombe (strain 972 / ATCC 24843)</name>
    <name type="common">Fission yeast</name>
    <dbReference type="NCBI Taxonomy" id="284812"/>
    <lineage>
        <taxon>Eukaryota</taxon>
        <taxon>Fungi</taxon>
        <taxon>Dikarya</taxon>
        <taxon>Ascomycota</taxon>
        <taxon>Taphrinomycotina</taxon>
        <taxon>Schizosaccharomycetes</taxon>
        <taxon>Schizosaccharomycetales</taxon>
        <taxon>Schizosaccharomycetaceae</taxon>
        <taxon>Schizosaccharomyces</taxon>
    </lineage>
</organism>
<evidence type="ECO:0000255" key="1"/>
<evidence type="ECO:0000269" key="2">
    <source>
    </source>
</evidence>
<evidence type="ECO:0000305" key="3"/>
<dbReference type="EMBL" id="CU329672">
    <property type="protein sequence ID" value="CAC22108.1"/>
    <property type="molecule type" value="Genomic_DNA"/>
</dbReference>
<dbReference type="RefSeq" id="NP_587673.1">
    <property type="nucleotide sequence ID" value="NM_001022669.2"/>
</dbReference>
<dbReference type="SMR" id="Q9HDT8"/>
<dbReference type="BioGRID" id="276151">
    <property type="interactions" value="7"/>
</dbReference>
<dbReference type="EnsemblFungi" id="SPCP20C8.01c.1">
    <property type="protein sequence ID" value="SPCP20C8.01c.1:pep"/>
    <property type="gene ID" value="SPCP20C8.01c"/>
</dbReference>
<dbReference type="KEGG" id="spo:2539593"/>
<dbReference type="PomBase" id="SPCP20C8.01c"/>
<dbReference type="VEuPathDB" id="FungiDB:SPCP20C8.01c"/>
<dbReference type="HOGENOM" id="CLU_062677_0_0_1"/>
<dbReference type="InParanoid" id="Q9HDT8"/>
<dbReference type="PhylomeDB" id="Q9HDT8"/>
<dbReference type="PRO" id="PR:Q9HDT8"/>
<dbReference type="Proteomes" id="UP000002485">
    <property type="component" value="Chromosome III"/>
</dbReference>
<dbReference type="GO" id="GO:0005737">
    <property type="term" value="C:cytoplasm"/>
    <property type="evidence" value="ECO:0007005"/>
    <property type="project" value="PomBase"/>
</dbReference>
<dbReference type="Gene3D" id="1.20.5.170">
    <property type="match status" value="1"/>
</dbReference>
<dbReference type="Gene3D" id="1.20.5.190">
    <property type="match status" value="1"/>
</dbReference>
<dbReference type="SUPFAM" id="SSF57997">
    <property type="entry name" value="Tropomyosin"/>
    <property type="match status" value="1"/>
</dbReference>
<feature type="chain" id="PRO_0000343139" description="UPF0612 protein P20C8.01c">
    <location>
        <begin position="1"/>
        <end position="247"/>
    </location>
</feature>
<feature type="coiled-coil region" evidence="1">
    <location>
        <begin position="27"/>
        <end position="63"/>
    </location>
</feature>
<feature type="coiled-coil region" evidence="1">
    <location>
        <begin position="138"/>
        <end position="225"/>
    </location>
</feature>
<comment type="subcellular location">
    <subcellularLocation>
        <location evidence="2">Cytoplasm</location>
    </subcellularLocation>
</comment>
<comment type="similarity">
    <text evidence="3">Belongs to the UPF0612 family.</text>
</comment>
<accession>Q9HDT8</accession>
<sequence length="247" mass="29671">MMSNENFDNDYNLPPPNDSAEDLKIFIKRYERSVDSTLLEIDENKREALEKYIEERDRKMKYEIECNERLQGWKKLAIEREISEEQSGEVQFPRWIDEWANTKLGGIFERIFSKMDSMQNDMNSRFDAMQNEMNSRFDTVQNEMTSMKGEMAEMKVEMVEMKRETIRLNTRIDLLEQKTEARFQSIEQRFNSIDQRFNSIDRRFDSMEQRLDSMDQKMETIDARSCRSIMLTRKLENTTRSDQGYLA</sequence>